<accession>Q75F65</accession>
<organism>
    <name type="scientific">Eremothecium gossypii (strain ATCC 10895 / CBS 109.51 / FGSC 9923 / NRRL Y-1056)</name>
    <name type="common">Yeast</name>
    <name type="synonym">Ashbya gossypii</name>
    <dbReference type="NCBI Taxonomy" id="284811"/>
    <lineage>
        <taxon>Eukaryota</taxon>
        <taxon>Fungi</taxon>
        <taxon>Dikarya</taxon>
        <taxon>Ascomycota</taxon>
        <taxon>Saccharomycotina</taxon>
        <taxon>Saccharomycetes</taxon>
        <taxon>Saccharomycetales</taxon>
        <taxon>Saccharomycetaceae</taxon>
        <taxon>Eremothecium</taxon>
    </lineage>
</organism>
<reference key="1">
    <citation type="journal article" date="2004" name="Science">
        <title>The Ashbya gossypii genome as a tool for mapping the ancient Saccharomyces cerevisiae genome.</title>
        <authorList>
            <person name="Dietrich F.S."/>
            <person name="Voegeli S."/>
            <person name="Brachat S."/>
            <person name="Lerch A."/>
            <person name="Gates K."/>
            <person name="Steiner S."/>
            <person name="Mohr C."/>
            <person name="Poehlmann R."/>
            <person name="Luedi P."/>
            <person name="Choi S."/>
            <person name="Wing R.A."/>
            <person name="Flavier A."/>
            <person name="Gaffney T.D."/>
            <person name="Philippsen P."/>
        </authorList>
    </citation>
    <scope>NUCLEOTIDE SEQUENCE [LARGE SCALE GENOMIC DNA]</scope>
    <source>
        <strain>ATCC 10895 / CBS 109.51 / FGSC 9923 / NRRL Y-1056</strain>
    </source>
</reference>
<reference key="2">
    <citation type="journal article" date="2013" name="G3 (Bethesda)">
        <title>Genomes of Ashbya fungi isolated from insects reveal four mating-type loci, numerous translocations, lack of transposons, and distinct gene duplications.</title>
        <authorList>
            <person name="Dietrich F.S."/>
            <person name="Voegeli S."/>
            <person name="Kuo S."/>
            <person name="Philippsen P."/>
        </authorList>
    </citation>
    <scope>GENOME REANNOTATION</scope>
    <source>
        <strain>ATCC 10895 / CBS 109.51 / FGSC 9923 / NRRL Y-1056</strain>
    </source>
</reference>
<protein>
    <recommendedName>
        <fullName evidence="1">Thiamine thiazole synthase</fullName>
        <ecNumber evidence="1">2.4.2.60</ecNumber>
    </recommendedName>
    <alternativeName>
        <fullName evidence="1">Thiazole biosynthetic enzyme</fullName>
    </alternativeName>
</protein>
<evidence type="ECO:0000255" key="1">
    <source>
        <dbReference type="HAMAP-Rule" id="MF_03158"/>
    </source>
</evidence>
<gene>
    <name evidence="1" type="primary">THI4</name>
    <name type="ordered locus">AAL137W</name>
</gene>
<name>THI4_EREGS</name>
<feature type="chain" id="PRO_0000415870" description="Thiamine thiazole synthase">
    <location>
        <begin position="1"/>
        <end position="331"/>
    </location>
</feature>
<feature type="binding site" evidence="1">
    <location>
        <position position="82"/>
    </location>
    <ligand>
        <name>substrate</name>
    </ligand>
</feature>
<feature type="binding site" evidence="1">
    <location>
        <begin position="103"/>
        <end position="104"/>
    </location>
    <ligand>
        <name>substrate</name>
    </ligand>
</feature>
<feature type="binding site" evidence="1">
    <location>
        <position position="111"/>
    </location>
    <ligand>
        <name>substrate</name>
    </ligand>
</feature>
<feature type="binding site" evidence="1">
    <location>
        <position position="176"/>
    </location>
    <ligand>
        <name>substrate</name>
    </ligand>
</feature>
<feature type="binding site" evidence="1">
    <location>
        <position position="212"/>
    </location>
    <ligand>
        <name>substrate</name>
    </ligand>
</feature>
<feature type="binding site" evidence="1">
    <location>
        <position position="242"/>
    </location>
    <ligand>
        <name>substrate</name>
    </ligand>
</feature>
<feature type="binding site" evidence="1">
    <location>
        <position position="296"/>
    </location>
    <ligand>
        <name>substrate</name>
    </ligand>
</feature>
<feature type="binding site" evidence="1">
    <location>
        <begin position="306"/>
        <end position="308"/>
    </location>
    <ligand>
        <name>substrate</name>
    </ligand>
</feature>
<feature type="modified residue" description="2,3-didehydroalanine (Cys)" evidence="1">
    <location>
        <position position="210"/>
    </location>
</feature>
<comment type="function">
    <text evidence="1">Involved in biosynthesis of the thiamine precursor thiazole. Catalyzes the conversion of NAD and glycine to adenosine diphosphate 5-(2-hydroxyethyl)-4-methylthiazole-2-carboxylic acid (ADT), an adenylated thiazole intermediate. The reaction includes an iron-dependent sulfide transfer from a conserved cysteine residue of the protein to a thiazole intermediate. The enzyme can only undergo a single turnover, which suggests it is a suicide enzyme. May have additional roles in adaptation to various stress conditions and in DNA damage tolerance.</text>
</comment>
<comment type="catalytic activity">
    <reaction evidence="1">
        <text>[ADP-thiazole synthase]-L-cysteine + glycine + NAD(+) = [ADP-thiazole synthase]-dehydroalanine + ADP-5-ethyl-4-methylthiazole-2-carboxylate + nicotinamide + 3 H2O + 2 H(+)</text>
        <dbReference type="Rhea" id="RHEA:55708"/>
        <dbReference type="Rhea" id="RHEA-COMP:14264"/>
        <dbReference type="Rhea" id="RHEA-COMP:14265"/>
        <dbReference type="ChEBI" id="CHEBI:15377"/>
        <dbReference type="ChEBI" id="CHEBI:15378"/>
        <dbReference type="ChEBI" id="CHEBI:17154"/>
        <dbReference type="ChEBI" id="CHEBI:29950"/>
        <dbReference type="ChEBI" id="CHEBI:57305"/>
        <dbReference type="ChEBI" id="CHEBI:57540"/>
        <dbReference type="ChEBI" id="CHEBI:90873"/>
        <dbReference type="ChEBI" id="CHEBI:139151"/>
        <dbReference type="EC" id="2.4.2.60"/>
    </reaction>
</comment>
<comment type="cofactor">
    <cofactor evidence="1">
        <name>Fe cation</name>
        <dbReference type="ChEBI" id="CHEBI:24875"/>
    </cofactor>
    <text evidence="1">Binds 1 Fe cation per subunit.</text>
</comment>
<comment type="subunit">
    <text evidence="1">Homooctamer.</text>
</comment>
<comment type="subcellular location">
    <subcellularLocation>
        <location evidence="1">Cytoplasm</location>
    </subcellularLocation>
    <subcellularLocation>
        <location evidence="1">Nucleus</location>
    </subcellularLocation>
</comment>
<comment type="PTM">
    <text evidence="1">During the catalytic reaction, a sulfide is transferred from Cys-210 to a reaction intermediate, generating a dehydroalanine residue.</text>
</comment>
<comment type="similarity">
    <text evidence="1">Belongs to the THI4 family.</text>
</comment>
<sequence>MQNEHSEFAKMSQTLTNVQELRLRASTTRHALSDIVREKDWSDFQFAPIREATVSRAMTTRYFEDLYRYAVSDVVIVGAGSSGLSAAYVLAKNRPDLRIAIIEANVAPGGGAWLGGQLFSAMIMRKPTHLFLDELEIPYEDEGDYVVVKHAALFTSTVLSKVLQFPNVKLFNATAVEDLVTKPSANGGVTIAGVVTNWTLVTMAHDVQSCMDPNVIELEGYKDDGTRDPKKKHGVVLSTTGHDGPFGAFCAKRLAALDAQHAIKGMQSLDMNTAEAGVVKESGATAGVEYMYFAGMETATKKGVSRMGPTFGAMAVSGIKAAEEILRHFAE</sequence>
<dbReference type="EC" id="2.4.2.60" evidence="1"/>
<dbReference type="EMBL" id="AE016814">
    <property type="protein sequence ID" value="AAS50229.1"/>
    <property type="molecule type" value="Genomic_DNA"/>
</dbReference>
<dbReference type="RefSeq" id="NP_982405.1">
    <property type="nucleotide sequence ID" value="NM_207758.1"/>
</dbReference>
<dbReference type="SMR" id="Q75F65"/>
<dbReference type="FunCoup" id="Q75F65">
    <property type="interactions" value="902"/>
</dbReference>
<dbReference type="STRING" id="284811.Q75F65"/>
<dbReference type="EnsemblFungi" id="AAS50229">
    <property type="protein sequence ID" value="AAS50229"/>
    <property type="gene ID" value="AGOS_AAL137W"/>
</dbReference>
<dbReference type="GeneID" id="4618464"/>
<dbReference type="KEGG" id="ago:AGOS_AAL137W"/>
<dbReference type="eggNOG" id="KOG2960">
    <property type="taxonomic scope" value="Eukaryota"/>
</dbReference>
<dbReference type="HOGENOM" id="CLU_053727_0_0_1"/>
<dbReference type="InParanoid" id="Q75F65"/>
<dbReference type="OMA" id="MFPRIVV"/>
<dbReference type="OrthoDB" id="410463at2759"/>
<dbReference type="Proteomes" id="UP000000591">
    <property type="component" value="Chromosome I"/>
</dbReference>
<dbReference type="GO" id="GO:0005829">
    <property type="term" value="C:cytosol"/>
    <property type="evidence" value="ECO:0007669"/>
    <property type="project" value="UniProtKB-UniRule"/>
</dbReference>
<dbReference type="GO" id="GO:0005634">
    <property type="term" value="C:nucleus"/>
    <property type="evidence" value="ECO:0007669"/>
    <property type="project" value="UniProtKB-SubCell"/>
</dbReference>
<dbReference type="GO" id="GO:0160205">
    <property type="term" value="F:cysteine-dependent adenosine diphosphate thiazole synthase activity"/>
    <property type="evidence" value="ECO:0007669"/>
    <property type="project" value="UniProtKB-EC"/>
</dbReference>
<dbReference type="GO" id="GO:0008198">
    <property type="term" value="F:ferrous iron binding"/>
    <property type="evidence" value="ECO:0007669"/>
    <property type="project" value="EnsemblFungi"/>
</dbReference>
<dbReference type="GO" id="GO:0005506">
    <property type="term" value="F:iron ion binding"/>
    <property type="evidence" value="ECO:0000318"/>
    <property type="project" value="GO_Central"/>
</dbReference>
<dbReference type="GO" id="GO:0000002">
    <property type="term" value="P:mitochondrial genome maintenance"/>
    <property type="evidence" value="ECO:0007669"/>
    <property type="project" value="EnsemblFungi"/>
</dbReference>
<dbReference type="GO" id="GO:0009228">
    <property type="term" value="P:thiamine biosynthetic process"/>
    <property type="evidence" value="ECO:0007669"/>
    <property type="project" value="UniProtKB-UniRule"/>
</dbReference>
<dbReference type="GO" id="GO:0052837">
    <property type="term" value="P:thiazole biosynthetic process"/>
    <property type="evidence" value="ECO:0000318"/>
    <property type="project" value="GO_Central"/>
</dbReference>
<dbReference type="Gene3D" id="6.10.250.2840">
    <property type="match status" value="1"/>
</dbReference>
<dbReference type="Gene3D" id="3.50.50.60">
    <property type="entry name" value="FAD/NAD(P)-binding domain"/>
    <property type="match status" value="1"/>
</dbReference>
<dbReference type="HAMAP" id="MF_03158">
    <property type="entry name" value="THI4"/>
    <property type="match status" value="1"/>
</dbReference>
<dbReference type="InterPro" id="IPR036188">
    <property type="entry name" value="FAD/NAD-bd_sf"/>
</dbReference>
<dbReference type="InterPro" id="IPR027495">
    <property type="entry name" value="Sti35"/>
</dbReference>
<dbReference type="InterPro" id="IPR002922">
    <property type="entry name" value="Thi4_fam"/>
</dbReference>
<dbReference type="NCBIfam" id="TIGR00292">
    <property type="entry name" value="sulfide-dependent adenosine diphosphate thiazole synthase"/>
    <property type="match status" value="1"/>
</dbReference>
<dbReference type="PANTHER" id="PTHR43422">
    <property type="entry name" value="THIAMINE THIAZOLE SYNTHASE"/>
    <property type="match status" value="1"/>
</dbReference>
<dbReference type="PANTHER" id="PTHR43422:SF3">
    <property type="entry name" value="THIAMINE THIAZOLE SYNTHASE"/>
    <property type="match status" value="1"/>
</dbReference>
<dbReference type="Pfam" id="PF01946">
    <property type="entry name" value="Thi4"/>
    <property type="match status" value="1"/>
</dbReference>
<dbReference type="SUPFAM" id="SSF51905">
    <property type="entry name" value="FAD/NAD(P)-binding domain"/>
    <property type="match status" value="1"/>
</dbReference>
<proteinExistence type="inferred from homology"/>
<keyword id="KW-0963">Cytoplasm</keyword>
<keyword id="KW-0408">Iron</keyword>
<keyword id="KW-0479">Metal-binding</keyword>
<keyword id="KW-0520">NAD</keyword>
<keyword id="KW-0539">Nucleus</keyword>
<keyword id="KW-1185">Reference proteome</keyword>
<keyword id="KW-0784">Thiamine biosynthesis</keyword>
<keyword id="KW-0808">Transferase</keyword>